<dbReference type="EMBL" id="EU346907">
    <property type="protein sequence ID" value="ACB12323.1"/>
    <property type="molecule type" value="mRNA"/>
</dbReference>
<dbReference type="SMR" id="C3RT24"/>
<dbReference type="GO" id="GO:0005576">
    <property type="term" value="C:extracellular region"/>
    <property type="evidence" value="ECO:0000314"/>
    <property type="project" value="UniProtKB"/>
</dbReference>
<dbReference type="GO" id="GO:0061844">
    <property type="term" value="P:antimicrobial humoral immune response mediated by antimicrobial peptide"/>
    <property type="evidence" value="ECO:0000314"/>
    <property type="project" value="UniProtKB"/>
</dbReference>
<dbReference type="GO" id="GO:0050832">
    <property type="term" value="P:defense response to fungus"/>
    <property type="evidence" value="ECO:0000314"/>
    <property type="project" value="UniProtKB"/>
</dbReference>
<dbReference type="GO" id="GO:0050829">
    <property type="term" value="P:defense response to Gram-negative bacterium"/>
    <property type="evidence" value="ECO:0000314"/>
    <property type="project" value="UniProtKB"/>
</dbReference>
<dbReference type="GO" id="GO:0050830">
    <property type="term" value="P:defense response to Gram-positive bacterium"/>
    <property type="evidence" value="ECO:0000314"/>
    <property type="project" value="UniProtKB"/>
</dbReference>
<dbReference type="GO" id="GO:0031640">
    <property type="term" value="P:killing of cells of another organism"/>
    <property type="evidence" value="ECO:0007669"/>
    <property type="project" value="UniProtKB-KW"/>
</dbReference>
<dbReference type="InterPro" id="IPR012521">
    <property type="entry name" value="Antimicrobial_frog_2"/>
</dbReference>
<dbReference type="InterPro" id="IPR004275">
    <property type="entry name" value="Frog_antimicrobial_propeptide"/>
</dbReference>
<dbReference type="Pfam" id="PF08023">
    <property type="entry name" value="Antimicrobial_2"/>
    <property type="match status" value="1"/>
</dbReference>
<dbReference type="Pfam" id="PF03032">
    <property type="entry name" value="FSAP_sig_propep"/>
    <property type="match status" value="1"/>
</dbReference>
<evidence type="ECO:0000255" key="1"/>
<evidence type="ECO:0000269" key="2">
    <source>
    </source>
</evidence>
<evidence type="ECO:0000303" key="3">
    <source>
    </source>
</evidence>
<evidence type="ECO:0000305" key="4"/>
<evidence type="ECO:0000305" key="5">
    <source>
    </source>
</evidence>
<comment type="function">
    <text evidence="2">Has antimicrobial activity against Gram-positive bacteria S.aureus ATCC 2592 (MIC=10.0 uM), S.aureus ATCC 43300 (MIC=10.0 uM) and B.subtilis (MIC=30.0 uM), against Gram-negative bacteria E.coli ML-35P (MIC=10.0 uM), P.aeruginosa PA01 (MIC=2.5 uM) and P.aeruginosa ATCC 27853 (MIC=2.5 uM) and against fungus C.albicans ATCC 2002 (MIC=10.0 uM).</text>
</comment>
<comment type="subcellular location">
    <subcellularLocation>
        <location evidence="1 2">Secreted</location>
    </subcellularLocation>
</comment>
<comment type="tissue specificity">
    <text evidence="2">Expressed by the skin glands.</text>
</comment>
<comment type="mass spectrometry" mass="3464.5" method="MALDI" evidence="2"/>
<comment type="similarity">
    <text evidence="1">Belongs to the frog skin active peptide (FSAP) family. Brevinin subfamily.</text>
</comment>
<organism>
    <name type="scientific">Limnonectes kuhlii</name>
    <name type="common">Kuhl's Creek frog</name>
    <name type="synonym">Rana kuhlii</name>
    <dbReference type="NCBI Taxonomy" id="110107"/>
    <lineage>
        <taxon>Eukaryota</taxon>
        <taxon>Metazoa</taxon>
        <taxon>Chordata</taxon>
        <taxon>Craniata</taxon>
        <taxon>Vertebrata</taxon>
        <taxon>Euteleostomi</taxon>
        <taxon>Amphibia</taxon>
        <taxon>Batrachia</taxon>
        <taxon>Anura</taxon>
        <taxon>Neobatrachia</taxon>
        <taxon>Ranoidea</taxon>
        <taxon>Dicroglossidae</taxon>
        <taxon>Dicroglossinae</taxon>
        <taxon>Limnonectes</taxon>
    </lineage>
</organism>
<reference evidence="4" key="1">
    <citation type="journal article" date="2013" name="Mol. Biol. Rep.">
        <title>Five novel antimicrobial peptides from the Kuhl's wart frog skin secretions, Limnonectes kuhlii.</title>
        <authorList>
            <person name="Wang G."/>
            <person name="Wang Y."/>
            <person name="Ma D."/>
            <person name="Liu H."/>
            <person name="Li J."/>
            <person name="Zhang K."/>
            <person name="Yang X."/>
            <person name="Lai R."/>
            <person name="Liu J."/>
        </authorList>
    </citation>
    <scope>NUCLEOTIDE SEQUENCE [MRNA]</scope>
    <scope>PROTEIN SEQUENCE OF 43-75</scope>
    <scope>FUNCTION</scope>
    <scope>SUBCELLULAR LOCATION</scope>
    <scope>TISSUE SPECIFICITY</scope>
    <scope>MASS SPECTROMETRY</scope>
    <source>
        <tissue evidence="3">Skin</tissue>
        <tissue evidence="3">Skin secretion</tissue>
    </source>
</reference>
<accession>C3RT24</accession>
<name>RUG2_LIMKU</name>
<protein>
    <recommendedName>
        <fullName evidence="3">Rugosin-LK2</fullName>
    </recommendedName>
</protein>
<keyword id="KW-0878">Amphibian defense peptide</keyword>
<keyword id="KW-0044">Antibiotic</keyword>
<keyword id="KW-0929">Antimicrobial</keyword>
<keyword id="KW-0165">Cleavage on pair of basic residues</keyword>
<keyword id="KW-0903">Direct protein sequencing</keyword>
<keyword id="KW-0295">Fungicide</keyword>
<keyword id="KW-0964">Secreted</keyword>
<keyword id="KW-0732">Signal</keyword>
<feature type="signal peptide" evidence="1">
    <location>
        <begin position="1"/>
        <end position="24"/>
    </location>
</feature>
<feature type="propeptide" id="PRO_0000445405" evidence="5">
    <location>
        <begin position="25"/>
        <end position="40"/>
    </location>
</feature>
<feature type="peptide" id="PRO_0000445406" description="Rugosin-LK2" evidence="2">
    <location>
        <begin position="43"/>
        <end position="75"/>
    </location>
</feature>
<sequence length="75" mass="8347">MFTMKKSLLFLFFLGTISLSFCEGERSADEDDEGEMTEEEKRSIRDKGKTIAIDLAKSAGTGVLKTLMCKLDKSC</sequence>
<proteinExistence type="evidence at protein level"/>